<organism>
    <name type="scientific">Nicotiana tabacum</name>
    <name type="common">Common tobacco</name>
    <dbReference type="NCBI Taxonomy" id="4097"/>
    <lineage>
        <taxon>Eukaryota</taxon>
        <taxon>Viridiplantae</taxon>
        <taxon>Streptophyta</taxon>
        <taxon>Embryophyta</taxon>
        <taxon>Tracheophyta</taxon>
        <taxon>Spermatophyta</taxon>
        <taxon>Magnoliopsida</taxon>
        <taxon>eudicotyledons</taxon>
        <taxon>Gunneridae</taxon>
        <taxon>Pentapetalae</taxon>
        <taxon>asterids</taxon>
        <taxon>lamiids</taxon>
        <taxon>Solanales</taxon>
        <taxon>Solanaceae</taxon>
        <taxon>Nicotianoideae</taxon>
        <taxon>Nicotianeae</taxon>
        <taxon>Nicotiana</taxon>
    </lineage>
</organism>
<name>RK4_TOBAC</name>
<keyword id="KW-0150">Chloroplast</keyword>
<keyword id="KW-0934">Plastid</keyword>
<keyword id="KW-1185">Reference proteome</keyword>
<keyword id="KW-0687">Ribonucleoprotein</keyword>
<keyword id="KW-0689">Ribosomal protein</keyword>
<keyword id="KW-0694">RNA-binding</keyword>
<keyword id="KW-0699">rRNA-binding</keyword>
<keyword id="KW-0809">Transit peptide</keyword>
<comment type="function">
    <text evidence="1">This protein binds directly and specifically to 23S rRNA (By similarity). May play a role in plastid transcriptional regulation.</text>
</comment>
<comment type="subunit">
    <text evidence="1">Part of the 50S ribosomal subunit.</text>
</comment>
<comment type="subcellular location">
    <subcellularLocation>
        <location>Plastid</location>
        <location>Chloroplast</location>
    </subcellularLocation>
</comment>
<comment type="similarity">
    <text evidence="3">Belongs to the universal ribosomal protein uL4 family.</text>
</comment>
<protein>
    <recommendedName>
        <fullName evidence="3">Large ribosomal subunit protein uL4c</fullName>
    </recommendedName>
    <alternativeName>
        <fullName>50S ribosomal protein L4, chloroplastic</fullName>
    </alternativeName>
    <alternativeName>
        <fullName>CL4</fullName>
    </alternativeName>
    <alternativeName>
        <fullName>R-protein L4</fullName>
    </alternativeName>
</protein>
<feature type="transit peptide" description="Chloroplast" evidence="1">
    <location>
        <begin position="1"/>
        <end position="43"/>
    </location>
</feature>
<feature type="chain" id="PRO_0000030540" description="Large ribosomal subunit protein uL4c">
    <location>
        <begin position="44"/>
        <end position="282"/>
    </location>
</feature>
<feature type="region of interest" description="Disordered" evidence="2">
    <location>
        <begin position="86"/>
        <end position="133"/>
    </location>
</feature>
<feature type="region of interest" description="Disordered" evidence="2">
    <location>
        <begin position="251"/>
        <end position="282"/>
    </location>
</feature>
<feature type="compositionally biased region" description="Acidic residues" evidence="2">
    <location>
        <begin position="255"/>
        <end position="282"/>
    </location>
</feature>
<proteinExistence type="evidence at transcript level"/>
<accession>O80361</accession>
<sequence>MAASLSFFSSSIFLSNPNIQSSKHLLFRSPKQLSVAAIATIRSEVATIPILSFDGAEVGSTTLNLKSAPLDTARAVVHRGLTTDLRNQRRGTASTLTRSEVRGGGIKPYPQKKTGRARRGSNRTPLRPGGGVVFGPKPKDWSVKINKKEKRLAISTALSSASENTIVVEEFNDKFEKPKTKEFIDLMRRWGLDPKEKSLFLMTDVSDNVILSSRNIGTLKMLTPRTLNLFDILDSEKLVLTKSAVDFLNERYGDENEWEDEEEDDQEDNDGGEAEESTESSE</sequence>
<reference key="1">
    <citation type="submission" date="1998-01" db="EMBL/GenBank/DDBJ databases">
        <title>Tobacco chloroplast ribosomal protein L4.</title>
        <authorList>
            <person name="Yokoi F."/>
            <person name="Ohta M."/>
            <person name="Sugiura M."/>
        </authorList>
    </citation>
    <scope>NUCLEOTIDE SEQUENCE [MRNA]</scope>
    <source>
        <strain>cv. Bright Yellow 4</strain>
        <tissue>Leaf</tissue>
    </source>
</reference>
<evidence type="ECO:0000250" key="1"/>
<evidence type="ECO:0000256" key="2">
    <source>
        <dbReference type="SAM" id="MobiDB-lite"/>
    </source>
</evidence>
<evidence type="ECO:0000305" key="3"/>
<gene>
    <name type="primary">RPL4</name>
</gene>
<dbReference type="EMBL" id="AB010878">
    <property type="protein sequence ID" value="BAA31510.1"/>
    <property type="molecule type" value="mRNA"/>
</dbReference>
<dbReference type="PIR" id="T01739">
    <property type="entry name" value="T01739"/>
</dbReference>
<dbReference type="RefSeq" id="NP_001312930.1">
    <property type="nucleotide sequence ID" value="NM_001326001.1"/>
</dbReference>
<dbReference type="SMR" id="O80361"/>
<dbReference type="STRING" id="4097.O80361"/>
<dbReference type="PaxDb" id="4097-O80361"/>
<dbReference type="GeneID" id="107817573"/>
<dbReference type="KEGG" id="nta:107817573"/>
<dbReference type="OMA" id="SMFFMTE"/>
<dbReference type="OrthoDB" id="275876at2759"/>
<dbReference type="Proteomes" id="UP000084051">
    <property type="component" value="Unplaced"/>
</dbReference>
<dbReference type="GO" id="GO:0009507">
    <property type="term" value="C:chloroplast"/>
    <property type="evidence" value="ECO:0007669"/>
    <property type="project" value="UniProtKB-SubCell"/>
</dbReference>
<dbReference type="GO" id="GO:1990904">
    <property type="term" value="C:ribonucleoprotein complex"/>
    <property type="evidence" value="ECO:0007669"/>
    <property type="project" value="UniProtKB-KW"/>
</dbReference>
<dbReference type="GO" id="GO:0005840">
    <property type="term" value="C:ribosome"/>
    <property type="evidence" value="ECO:0007669"/>
    <property type="project" value="UniProtKB-KW"/>
</dbReference>
<dbReference type="GO" id="GO:0019843">
    <property type="term" value="F:rRNA binding"/>
    <property type="evidence" value="ECO:0007669"/>
    <property type="project" value="UniProtKB-KW"/>
</dbReference>
<dbReference type="GO" id="GO:0003735">
    <property type="term" value="F:structural constituent of ribosome"/>
    <property type="evidence" value="ECO:0000318"/>
    <property type="project" value="GO_Central"/>
</dbReference>
<dbReference type="GO" id="GO:0006412">
    <property type="term" value="P:translation"/>
    <property type="evidence" value="ECO:0007669"/>
    <property type="project" value="InterPro"/>
</dbReference>
<dbReference type="FunFam" id="3.40.1370.10:FF:000012">
    <property type="entry name" value="50S ribosomal protein L4"/>
    <property type="match status" value="1"/>
</dbReference>
<dbReference type="Gene3D" id="3.40.1370.10">
    <property type="match status" value="1"/>
</dbReference>
<dbReference type="HAMAP" id="MF_01328_B">
    <property type="entry name" value="Ribosomal_uL4_B"/>
    <property type="match status" value="1"/>
</dbReference>
<dbReference type="InterPro" id="IPR002136">
    <property type="entry name" value="Ribosomal_uL4"/>
</dbReference>
<dbReference type="InterPro" id="IPR013005">
    <property type="entry name" value="Ribosomal_uL4-like"/>
</dbReference>
<dbReference type="InterPro" id="IPR023574">
    <property type="entry name" value="Ribosomal_uL4_dom_sf"/>
</dbReference>
<dbReference type="NCBIfam" id="TIGR03953">
    <property type="entry name" value="rplD_bact"/>
    <property type="match status" value="1"/>
</dbReference>
<dbReference type="PANTHER" id="PTHR10746">
    <property type="entry name" value="50S RIBOSOMAL PROTEIN L4"/>
    <property type="match status" value="1"/>
</dbReference>
<dbReference type="PANTHER" id="PTHR10746:SF17">
    <property type="entry name" value="LARGE RIBOSOMAL SUBUNIT PROTEIN UL4C"/>
    <property type="match status" value="1"/>
</dbReference>
<dbReference type="Pfam" id="PF00573">
    <property type="entry name" value="Ribosomal_L4"/>
    <property type="match status" value="1"/>
</dbReference>
<dbReference type="SUPFAM" id="SSF52166">
    <property type="entry name" value="Ribosomal protein L4"/>
    <property type="match status" value="1"/>
</dbReference>